<organism>
    <name type="scientific">Gnetum parvifolium</name>
    <name type="common">Small-leaved jointfir</name>
    <name type="synonym">Gnetum scandens var. parvifolium</name>
    <dbReference type="NCBI Taxonomy" id="33153"/>
    <lineage>
        <taxon>Eukaryota</taxon>
        <taxon>Viridiplantae</taxon>
        <taxon>Streptophyta</taxon>
        <taxon>Embryophyta</taxon>
        <taxon>Tracheophyta</taxon>
        <taxon>Spermatophyta</taxon>
        <taxon>Gnetopsida</taxon>
        <taxon>Gnetidae</taxon>
        <taxon>Gnetales</taxon>
        <taxon>Gnetaceae</taxon>
        <taxon>Gnetum</taxon>
    </lineage>
</organism>
<proteinExistence type="inferred from homology"/>
<geneLocation type="chloroplast"/>
<accession>A6BM08</accession>
<accession>B7ZIB1</accession>
<dbReference type="EC" id="7.1.2.2" evidence="1"/>
<dbReference type="EMBL" id="AB295904">
    <property type="protein sequence ID" value="BAF64853.1"/>
    <property type="molecule type" value="Genomic_DNA"/>
</dbReference>
<dbReference type="EMBL" id="AP009569">
    <property type="protein sequence ID" value="BAH11291.1"/>
    <property type="molecule type" value="Genomic_DNA"/>
</dbReference>
<dbReference type="RefSeq" id="YP_002519780.1">
    <property type="nucleotide sequence ID" value="NC_011942.1"/>
</dbReference>
<dbReference type="SMR" id="A6BM08"/>
<dbReference type="GeneID" id="7368208"/>
<dbReference type="GO" id="GO:0009535">
    <property type="term" value="C:chloroplast thylakoid membrane"/>
    <property type="evidence" value="ECO:0007669"/>
    <property type="project" value="UniProtKB-SubCell"/>
</dbReference>
<dbReference type="GO" id="GO:0045259">
    <property type="term" value="C:proton-transporting ATP synthase complex"/>
    <property type="evidence" value="ECO:0007669"/>
    <property type="project" value="UniProtKB-KW"/>
</dbReference>
<dbReference type="GO" id="GO:0043531">
    <property type="term" value="F:ADP binding"/>
    <property type="evidence" value="ECO:0007669"/>
    <property type="project" value="TreeGrafter"/>
</dbReference>
<dbReference type="GO" id="GO:0005524">
    <property type="term" value="F:ATP binding"/>
    <property type="evidence" value="ECO:0007669"/>
    <property type="project" value="UniProtKB-UniRule"/>
</dbReference>
<dbReference type="GO" id="GO:0046933">
    <property type="term" value="F:proton-transporting ATP synthase activity, rotational mechanism"/>
    <property type="evidence" value="ECO:0007669"/>
    <property type="project" value="UniProtKB-UniRule"/>
</dbReference>
<dbReference type="CDD" id="cd18113">
    <property type="entry name" value="ATP-synt_F1_alpha_C"/>
    <property type="match status" value="1"/>
</dbReference>
<dbReference type="CDD" id="cd18116">
    <property type="entry name" value="ATP-synt_F1_alpha_N"/>
    <property type="match status" value="1"/>
</dbReference>
<dbReference type="CDD" id="cd01132">
    <property type="entry name" value="F1-ATPase_alpha_CD"/>
    <property type="match status" value="1"/>
</dbReference>
<dbReference type="FunFam" id="1.20.150.20:FF:000001">
    <property type="entry name" value="ATP synthase subunit alpha"/>
    <property type="match status" value="1"/>
</dbReference>
<dbReference type="FunFam" id="2.40.30.20:FF:000001">
    <property type="entry name" value="ATP synthase subunit alpha"/>
    <property type="match status" value="1"/>
</dbReference>
<dbReference type="FunFam" id="3.40.50.300:FF:000002">
    <property type="entry name" value="ATP synthase subunit alpha"/>
    <property type="match status" value="1"/>
</dbReference>
<dbReference type="Gene3D" id="2.40.30.20">
    <property type="match status" value="1"/>
</dbReference>
<dbReference type="Gene3D" id="1.20.150.20">
    <property type="entry name" value="ATP synthase alpha/beta chain, C-terminal domain"/>
    <property type="match status" value="1"/>
</dbReference>
<dbReference type="Gene3D" id="3.40.50.300">
    <property type="entry name" value="P-loop containing nucleotide triphosphate hydrolases"/>
    <property type="match status" value="1"/>
</dbReference>
<dbReference type="HAMAP" id="MF_01346">
    <property type="entry name" value="ATP_synth_alpha_bact"/>
    <property type="match status" value="1"/>
</dbReference>
<dbReference type="InterPro" id="IPR023366">
    <property type="entry name" value="ATP_synth_asu-like_sf"/>
</dbReference>
<dbReference type="InterPro" id="IPR000793">
    <property type="entry name" value="ATP_synth_asu_C"/>
</dbReference>
<dbReference type="InterPro" id="IPR038376">
    <property type="entry name" value="ATP_synth_asu_C_sf"/>
</dbReference>
<dbReference type="InterPro" id="IPR033732">
    <property type="entry name" value="ATP_synth_F1_a_nt-bd_dom"/>
</dbReference>
<dbReference type="InterPro" id="IPR005294">
    <property type="entry name" value="ATP_synth_F1_asu"/>
</dbReference>
<dbReference type="InterPro" id="IPR020003">
    <property type="entry name" value="ATPase_a/bsu_AS"/>
</dbReference>
<dbReference type="InterPro" id="IPR004100">
    <property type="entry name" value="ATPase_F1/V1/A1_a/bsu_N"/>
</dbReference>
<dbReference type="InterPro" id="IPR036121">
    <property type="entry name" value="ATPase_F1/V1/A1_a/bsu_N_sf"/>
</dbReference>
<dbReference type="InterPro" id="IPR000194">
    <property type="entry name" value="ATPase_F1/V1/A1_a/bsu_nucl-bd"/>
</dbReference>
<dbReference type="InterPro" id="IPR027417">
    <property type="entry name" value="P-loop_NTPase"/>
</dbReference>
<dbReference type="NCBIfam" id="TIGR00962">
    <property type="entry name" value="atpA"/>
    <property type="match status" value="1"/>
</dbReference>
<dbReference type="NCBIfam" id="NF009884">
    <property type="entry name" value="PRK13343.1"/>
    <property type="match status" value="1"/>
</dbReference>
<dbReference type="PANTHER" id="PTHR48082">
    <property type="entry name" value="ATP SYNTHASE SUBUNIT ALPHA, MITOCHONDRIAL"/>
    <property type="match status" value="1"/>
</dbReference>
<dbReference type="PANTHER" id="PTHR48082:SF2">
    <property type="entry name" value="ATP SYNTHASE SUBUNIT ALPHA, MITOCHONDRIAL"/>
    <property type="match status" value="1"/>
</dbReference>
<dbReference type="Pfam" id="PF00006">
    <property type="entry name" value="ATP-synt_ab"/>
    <property type="match status" value="1"/>
</dbReference>
<dbReference type="Pfam" id="PF00306">
    <property type="entry name" value="ATP-synt_ab_C"/>
    <property type="match status" value="1"/>
</dbReference>
<dbReference type="Pfam" id="PF02874">
    <property type="entry name" value="ATP-synt_ab_N"/>
    <property type="match status" value="1"/>
</dbReference>
<dbReference type="PIRSF" id="PIRSF039088">
    <property type="entry name" value="F_ATPase_subunit_alpha"/>
    <property type="match status" value="1"/>
</dbReference>
<dbReference type="SUPFAM" id="SSF47917">
    <property type="entry name" value="C-terminal domain of alpha and beta subunits of F1 ATP synthase"/>
    <property type="match status" value="1"/>
</dbReference>
<dbReference type="SUPFAM" id="SSF50615">
    <property type="entry name" value="N-terminal domain of alpha and beta subunits of F1 ATP synthase"/>
    <property type="match status" value="1"/>
</dbReference>
<dbReference type="SUPFAM" id="SSF52540">
    <property type="entry name" value="P-loop containing nucleoside triphosphate hydrolases"/>
    <property type="match status" value="1"/>
</dbReference>
<dbReference type="PROSITE" id="PS00152">
    <property type="entry name" value="ATPASE_ALPHA_BETA"/>
    <property type="match status" value="1"/>
</dbReference>
<protein>
    <recommendedName>
        <fullName evidence="1">ATP synthase subunit alpha, chloroplastic</fullName>
        <ecNumber evidence="1">7.1.2.2</ecNumber>
    </recommendedName>
    <alternativeName>
        <fullName evidence="1">ATP synthase F1 sector subunit alpha</fullName>
    </alternativeName>
    <alternativeName>
        <fullName evidence="1">F-ATPase subunit alpha</fullName>
    </alternativeName>
</protein>
<gene>
    <name evidence="1" type="primary">atpA</name>
</gene>
<comment type="function">
    <text evidence="1">Produces ATP from ADP in the presence of a proton gradient across the membrane. The alpha chain is a regulatory subunit.</text>
</comment>
<comment type="catalytic activity">
    <reaction evidence="1">
        <text>ATP + H2O + 4 H(+)(in) = ADP + phosphate + 5 H(+)(out)</text>
        <dbReference type="Rhea" id="RHEA:57720"/>
        <dbReference type="ChEBI" id="CHEBI:15377"/>
        <dbReference type="ChEBI" id="CHEBI:15378"/>
        <dbReference type="ChEBI" id="CHEBI:30616"/>
        <dbReference type="ChEBI" id="CHEBI:43474"/>
        <dbReference type="ChEBI" id="CHEBI:456216"/>
        <dbReference type="EC" id="7.1.2.2"/>
    </reaction>
</comment>
<comment type="subunit">
    <text evidence="1">F-type ATPases have 2 components, CF(1) - the catalytic core - and CF(0) - the membrane proton channel. CF(1) has five subunits: alpha(3), beta(3), gamma(1), delta(1), epsilon(1). CF(0) has four main subunits: a, b, b' and c.</text>
</comment>
<comment type="subcellular location">
    <subcellularLocation>
        <location evidence="1">Plastid</location>
        <location evidence="1">Chloroplast thylakoid membrane</location>
        <topology evidence="1">Peripheral membrane protein</topology>
    </subcellularLocation>
</comment>
<comment type="similarity">
    <text evidence="1">Belongs to the ATPase alpha/beta chains family.</text>
</comment>
<reference key="1">
    <citation type="journal article" date="2007" name="Mol. Biol. Evol.">
        <title>Chloroplast genome (cpDNA) of Cycas taitungensis and 56 cp protein-coding genes of Gnetum parvifolium: insights into cpDNA evolution and phylogeny of extant seed plants.</title>
        <authorList>
            <person name="Wu C.-S."/>
            <person name="Wang Y.-N."/>
            <person name="Liu S.-M."/>
            <person name="Chaw S.-M."/>
        </authorList>
    </citation>
    <scope>NUCLEOTIDE SEQUENCE [LARGE SCALE GENOMIC DNA]</scope>
</reference>
<reference key="2">
    <citation type="journal article" date="2009" name="Mol. Phylogenet. Evol.">
        <title>Evolution of reduced and compact chloroplast genomes (cpDNAs) in gnetophytes: Selection toward a lower-cost strategy.</title>
        <authorList>
            <person name="Wu C.-S."/>
            <person name="Lai Y.-T."/>
            <person name="Lin C.-P."/>
            <person name="Wang Y.-N."/>
            <person name="Chaw S.-M."/>
        </authorList>
    </citation>
    <scope>NUCLEOTIDE SEQUENCE [LARGE SCALE GENOMIC DNA]</scope>
</reference>
<feature type="chain" id="PRO_0000339087" description="ATP synthase subunit alpha, chloroplastic">
    <location>
        <begin position="1"/>
        <end position="508"/>
    </location>
</feature>
<feature type="binding site" evidence="1">
    <location>
        <begin position="171"/>
        <end position="178"/>
    </location>
    <ligand>
        <name>ATP</name>
        <dbReference type="ChEBI" id="CHEBI:30616"/>
    </ligand>
</feature>
<feature type="site" description="Required for activity" evidence="1">
    <location>
        <position position="364"/>
    </location>
</feature>
<evidence type="ECO:0000255" key="1">
    <source>
        <dbReference type="HAMAP-Rule" id="MF_01346"/>
    </source>
</evidence>
<keyword id="KW-0066">ATP synthesis</keyword>
<keyword id="KW-0067">ATP-binding</keyword>
<keyword id="KW-0139">CF(1)</keyword>
<keyword id="KW-0150">Chloroplast</keyword>
<keyword id="KW-0375">Hydrogen ion transport</keyword>
<keyword id="KW-0406">Ion transport</keyword>
<keyword id="KW-0472">Membrane</keyword>
<keyword id="KW-0547">Nucleotide-binding</keyword>
<keyword id="KW-0934">Plastid</keyword>
<keyword id="KW-0793">Thylakoid</keyword>
<keyword id="KW-1278">Translocase</keyword>
<keyword id="KW-0813">Transport</keyword>
<name>ATPA_GNEPA</name>
<sequence length="508" mass="55894">MMITIRPDEISSIIREQIEQYNNEIQVVNMGTVLQVGDGIARIHGLYEVMAGELVEFEDSTVGIALNLETQNVGVVLMGDGLTIKEGSFVKTTGKIAQIPVSDAFLGRIVNALAQPIDGRGPIPASEFRLIESPAPGIVSRRSVYEPLQTGLIAIDSMIPIGRGQRELIIGDRQTGKTAVATDTILNQKGQNVVCVYVAIGQKASSVAQVVNMLRERSAMEYTIVVVEPADSPATLQYLAPYTGTALAEYFMYKKKHTLIIYDDLSKQAQAYRQMSLLLRRPPGREAYPGDVFYLHSRLLERAAKLNSQLGEGSITALPIVETQAGDVSAYIPTNVISITDGQIFLSSDLFNAGIRPAINVGLSVSRVGSAAQIKAMKQVAGKLKLELAQTAELEAFAQFASDLDKGTQDQLARGQRLRESLKQPQSTPLTVEEQIATIFTGTNGYLDRFDIREVKKFLDQLREYLKKKKPQFGEIIRTTKIFTEEAEALLREAIKEQTELFVVQQKN</sequence>